<accession>Q31N19</accession>
<organism>
    <name type="scientific">Synechococcus elongatus (strain ATCC 33912 / PCC 7942 / FACHB-805)</name>
    <name type="common">Anacystis nidulans R2</name>
    <dbReference type="NCBI Taxonomy" id="1140"/>
    <lineage>
        <taxon>Bacteria</taxon>
        <taxon>Bacillati</taxon>
        <taxon>Cyanobacteriota</taxon>
        <taxon>Cyanophyceae</taxon>
        <taxon>Synechococcales</taxon>
        <taxon>Synechococcaceae</taxon>
        <taxon>Synechococcus</taxon>
    </lineage>
</organism>
<gene>
    <name evidence="1" type="primary">rpsT</name>
    <name evidence="1" type="synonym">rps20</name>
    <name type="ordered locus">Synpcc7942_1520</name>
</gene>
<dbReference type="EMBL" id="CP000100">
    <property type="protein sequence ID" value="ABB57550.1"/>
    <property type="molecule type" value="Genomic_DNA"/>
</dbReference>
<dbReference type="RefSeq" id="WP_011244815.1">
    <property type="nucleotide sequence ID" value="NZ_JACJTX010000004.1"/>
</dbReference>
<dbReference type="SMR" id="Q31N19"/>
<dbReference type="STRING" id="1140.Synpcc7942_1520"/>
<dbReference type="PaxDb" id="1140-Synpcc7942_1520"/>
<dbReference type="GeneID" id="72430445"/>
<dbReference type="KEGG" id="syf:Synpcc7942_1520"/>
<dbReference type="eggNOG" id="COG0268">
    <property type="taxonomic scope" value="Bacteria"/>
</dbReference>
<dbReference type="HOGENOM" id="CLU_160655_5_0_3"/>
<dbReference type="OrthoDB" id="9808392at2"/>
<dbReference type="BioCyc" id="SYNEL:SYNPCC7942_1520-MONOMER"/>
<dbReference type="Proteomes" id="UP000889800">
    <property type="component" value="Chromosome"/>
</dbReference>
<dbReference type="GO" id="GO:0005829">
    <property type="term" value="C:cytosol"/>
    <property type="evidence" value="ECO:0007669"/>
    <property type="project" value="TreeGrafter"/>
</dbReference>
<dbReference type="GO" id="GO:0015935">
    <property type="term" value="C:small ribosomal subunit"/>
    <property type="evidence" value="ECO:0007669"/>
    <property type="project" value="TreeGrafter"/>
</dbReference>
<dbReference type="GO" id="GO:0070181">
    <property type="term" value="F:small ribosomal subunit rRNA binding"/>
    <property type="evidence" value="ECO:0007669"/>
    <property type="project" value="TreeGrafter"/>
</dbReference>
<dbReference type="GO" id="GO:0003735">
    <property type="term" value="F:structural constituent of ribosome"/>
    <property type="evidence" value="ECO:0007669"/>
    <property type="project" value="InterPro"/>
</dbReference>
<dbReference type="GO" id="GO:0006412">
    <property type="term" value="P:translation"/>
    <property type="evidence" value="ECO:0007669"/>
    <property type="project" value="UniProtKB-UniRule"/>
</dbReference>
<dbReference type="FunFam" id="1.20.58.110:FF:000001">
    <property type="entry name" value="30S ribosomal protein S20"/>
    <property type="match status" value="1"/>
</dbReference>
<dbReference type="Gene3D" id="1.20.58.110">
    <property type="entry name" value="Ribosomal protein S20"/>
    <property type="match status" value="1"/>
</dbReference>
<dbReference type="HAMAP" id="MF_00500">
    <property type="entry name" value="Ribosomal_bS20"/>
    <property type="match status" value="1"/>
</dbReference>
<dbReference type="InterPro" id="IPR002583">
    <property type="entry name" value="Ribosomal_bS20"/>
</dbReference>
<dbReference type="InterPro" id="IPR036510">
    <property type="entry name" value="Ribosomal_bS20_sf"/>
</dbReference>
<dbReference type="NCBIfam" id="TIGR00029">
    <property type="entry name" value="S20"/>
    <property type="match status" value="1"/>
</dbReference>
<dbReference type="PANTHER" id="PTHR33398">
    <property type="entry name" value="30S RIBOSOMAL PROTEIN S20"/>
    <property type="match status" value="1"/>
</dbReference>
<dbReference type="PANTHER" id="PTHR33398:SF1">
    <property type="entry name" value="SMALL RIBOSOMAL SUBUNIT PROTEIN BS20C"/>
    <property type="match status" value="1"/>
</dbReference>
<dbReference type="Pfam" id="PF01649">
    <property type="entry name" value="Ribosomal_S20p"/>
    <property type="match status" value="1"/>
</dbReference>
<dbReference type="SUPFAM" id="SSF46992">
    <property type="entry name" value="Ribosomal protein S20"/>
    <property type="match status" value="1"/>
</dbReference>
<comment type="function">
    <text evidence="1">Binds directly to 16S ribosomal RNA.</text>
</comment>
<comment type="similarity">
    <text evidence="1">Belongs to the bacterial ribosomal protein bS20 family.</text>
</comment>
<reference key="1">
    <citation type="submission" date="2005-08" db="EMBL/GenBank/DDBJ databases">
        <title>Complete sequence of chromosome 1 of Synechococcus elongatus PCC 7942.</title>
        <authorList>
            <consortium name="US DOE Joint Genome Institute"/>
            <person name="Copeland A."/>
            <person name="Lucas S."/>
            <person name="Lapidus A."/>
            <person name="Barry K."/>
            <person name="Detter J.C."/>
            <person name="Glavina T."/>
            <person name="Hammon N."/>
            <person name="Israni S."/>
            <person name="Pitluck S."/>
            <person name="Schmutz J."/>
            <person name="Larimer F."/>
            <person name="Land M."/>
            <person name="Kyrpides N."/>
            <person name="Lykidis A."/>
            <person name="Golden S."/>
            <person name="Richardson P."/>
        </authorList>
    </citation>
    <scope>NUCLEOTIDE SEQUENCE [LARGE SCALE GENOMIC DNA]</scope>
    <source>
        <strain>ATCC 33912 / PCC 7942 / FACHB-805</strain>
    </source>
</reference>
<sequence>MANIKSAIKRVQIAERNRLRNKAYKSAVKTLVKHCFTAFDAYAADPNETARQAVNERLSAAYSKIDKAVKRGVLHANTGARKKARLAKAFHLKVDPQA</sequence>
<feature type="chain" id="PRO_0000236461" description="Small ribosomal subunit protein bS20">
    <location>
        <begin position="1"/>
        <end position="98"/>
    </location>
</feature>
<name>RS20_SYNE7</name>
<keyword id="KW-1185">Reference proteome</keyword>
<keyword id="KW-0687">Ribonucleoprotein</keyword>
<keyword id="KW-0689">Ribosomal protein</keyword>
<keyword id="KW-0694">RNA-binding</keyword>
<keyword id="KW-0699">rRNA-binding</keyword>
<proteinExistence type="inferred from homology"/>
<protein>
    <recommendedName>
        <fullName evidence="1">Small ribosomal subunit protein bS20</fullName>
    </recommendedName>
    <alternativeName>
        <fullName evidence="2">30S ribosomal protein S20</fullName>
    </alternativeName>
</protein>
<evidence type="ECO:0000255" key="1">
    <source>
        <dbReference type="HAMAP-Rule" id="MF_00500"/>
    </source>
</evidence>
<evidence type="ECO:0000305" key="2"/>